<organism>
    <name type="scientific">Picea sitchensis</name>
    <name type="common">Sitka spruce</name>
    <name type="synonym">Pinus sitchensis</name>
    <dbReference type="NCBI Taxonomy" id="3332"/>
    <lineage>
        <taxon>Eukaryota</taxon>
        <taxon>Viridiplantae</taxon>
        <taxon>Streptophyta</taxon>
        <taxon>Embryophyta</taxon>
        <taxon>Tracheophyta</taxon>
        <taxon>Spermatophyta</taxon>
        <taxon>Pinopsida</taxon>
        <taxon>Pinidae</taxon>
        <taxon>Conifers I</taxon>
        <taxon>Pinales</taxon>
        <taxon>Pinaceae</taxon>
        <taxon>Picea</taxon>
    </lineage>
</organism>
<name>ISOPS_PICSI</name>
<evidence type="ECO:0000250" key="1">
    <source>
        <dbReference type="UniProtKB" id="A0A1C9J6A7"/>
    </source>
</evidence>
<evidence type="ECO:0000250" key="2">
    <source>
        <dbReference type="UniProtKB" id="A9AWD5"/>
    </source>
</evidence>
<evidence type="ECO:0000250" key="3">
    <source>
        <dbReference type="UniProtKB" id="C7BKP9"/>
    </source>
</evidence>
<evidence type="ECO:0000250" key="4">
    <source>
        <dbReference type="UniProtKB" id="Q40577"/>
    </source>
</evidence>
<evidence type="ECO:0000255" key="5"/>
<evidence type="ECO:0000256" key="6">
    <source>
        <dbReference type="SAM" id="MobiDB-lite"/>
    </source>
</evidence>
<evidence type="ECO:0000269" key="7">
    <source>
    </source>
</evidence>
<evidence type="ECO:0000303" key="8">
    <source>
    </source>
</evidence>
<evidence type="ECO:0000305" key="9"/>
<gene>
    <name evidence="8" type="primary">TPS-Iso</name>
</gene>
<protein>
    <recommendedName>
        <fullName evidence="8">Isopimaradiene synthase, chloroplastic</fullName>
        <ecNumber evidence="7">4.2.3.-</ecNumber>
    </recommendedName>
    <alternativeName>
        <fullName evidence="8">Terpene synthase TPS-Iso</fullName>
        <shortName evidence="8">PsTPS-Iso</shortName>
    </alternativeName>
</protein>
<feature type="transit peptide" description="Chloroplast" evidence="5">
    <location>
        <begin position="1"/>
        <end position="37"/>
    </location>
</feature>
<feature type="chain" id="PRO_0000454418" description="Isopimaradiene synthase, chloroplastic">
    <location>
        <begin position="38"/>
        <end position="874"/>
    </location>
</feature>
<feature type="region of interest" description="Disordered" evidence="6">
    <location>
        <begin position="1"/>
        <end position="20"/>
    </location>
</feature>
<feature type="short sequence motif" description="DXDD motif" evidence="2">
    <location>
        <begin position="407"/>
        <end position="410"/>
    </location>
</feature>
<feature type="short sequence motif" description="DDXXD motif" evidence="1">
    <location>
        <begin position="626"/>
        <end position="630"/>
    </location>
</feature>
<feature type="compositionally biased region" description="Polar residues" evidence="6">
    <location>
        <begin position="1"/>
        <end position="12"/>
    </location>
</feature>
<feature type="binding site" evidence="3">
    <location>
        <position position="407"/>
    </location>
    <ligand>
        <name>Mg(2+)</name>
        <dbReference type="ChEBI" id="CHEBI:18420"/>
        <label>4</label>
    </ligand>
</feature>
<feature type="binding site" evidence="3">
    <location>
        <position position="409"/>
    </location>
    <ligand>
        <name>Mg(2+)</name>
        <dbReference type="ChEBI" id="CHEBI:18420"/>
        <label>4</label>
    </ligand>
</feature>
<feature type="binding site" evidence="4">
    <location>
        <position position="626"/>
    </location>
    <ligand>
        <name>Mg(2+)</name>
        <dbReference type="ChEBI" id="CHEBI:18420"/>
        <label>1</label>
    </ligand>
</feature>
<feature type="binding site" evidence="4">
    <location>
        <position position="626"/>
    </location>
    <ligand>
        <name>Mg(2+)</name>
        <dbReference type="ChEBI" id="CHEBI:18420"/>
        <label>2</label>
    </ligand>
</feature>
<feature type="binding site" evidence="4">
    <location>
        <position position="630"/>
    </location>
    <ligand>
        <name>Mg(2+)</name>
        <dbReference type="ChEBI" id="CHEBI:18420"/>
        <label>1</label>
    </ligand>
</feature>
<feature type="binding site" evidence="4">
    <location>
        <position position="630"/>
    </location>
    <ligand>
        <name>Mg(2+)</name>
        <dbReference type="ChEBI" id="CHEBI:18420"/>
        <label>2</label>
    </ligand>
</feature>
<feature type="binding site" evidence="4">
    <location>
        <position position="770"/>
    </location>
    <ligand>
        <name>Mg(2+)</name>
        <dbReference type="ChEBI" id="CHEBI:18420"/>
        <label>3</label>
    </ligand>
</feature>
<feature type="binding site" evidence="4">
    <location>
        <position position="778"/>
    </location>
    <ligand>
        <name>Mg(2+)</name>
        <dbReference type="ChEBI" id="CHEBI:18420"/>
        <label>3</label>
    </ligand>
</feature>
<keyword id="KW-0150">Chloroplast</keyword>
<keyword id="KW-0456">Lyase</keyword>
<keyword id="KW-0460">Magnesium</keyword>
<keyword id="KW-0479">Metal-binding</keyword>
<keyword id="KW-0934">Plastid</keyword>
<keyword id="KW-0809">Transit peptide</keyword>
<sequence>MALPSSSLSSRIPTGPHPLTHTQCIPHFSTTINAGISAAKPRSFYLRWGKDSQPKNLGSNKIIACVGEGTTSLPYQSAEKTDSLSAPTLVKREFPPGFWKDHVIDSLTSSHKVSAAEEKRIETLISDIKNIFRSMGYGETNPSAYDTAWVARIPAVDGSEQPEFPETLEWILQNQLKDGSWGEGFYFLAYDRILATLACMITLTLWRTGETQIRKGIEFFKTQAGKIEDEADSHRPSGFEIVFPAMLKEAKVLGLDLPYELSFIKQIIEKREAKLERLPTNILYALPTTLLYSLEGLQEIVDWQKIIKLQSKDGSFLTSPASTAAVFMRTGNKKCLEFLNFVLKKFGNHVPCHYPLDLFERLWAVDTVERLGIDRHFKEEIKDALDYVYSHWDERGIGWARENPVPDIDDTAMGLRILRLHGYNVSSDVLKTFRDENGEFFCFLGQTQRGVTDMLNVNRCSHVAFPGETIMQEAKLCTERYLRNALEDVGAFDKWALKKNIRGEVEYALKYPWHRSMPRLEARSYIEHYGPNDVWLGKTMYMMPYISNEKYLELAKLDFNHVQSLHQKELRDLRRWWKSSGFSDLKFTRERVTEIYFSAASFIFEPEFATCRYVYTKMSIFTVILDDLYDAHGTLDNLNLFSEGVKRWDLSLVDRMPQDMKICFTVLYNTVNEIAVEGRKRQGRDVLGYIRNVLEILLAAHTKEAEWSATRYVPSFDEYIENASVSISLGTVVLISALFTGEILTDDVLSKIGRGSRFLQLMDLTGRLVNDTKTYQAERGQGEVASAVQCYMKDHPEISEEEALKHVYTVMENALDELNREFVNNREVPDSCRRLVFETARIMQWFYMEGDGFTVSHEMEIKEHVKNCLFQPVA</sequence>
<accession>F2XF92</accession>
<proteinExistence type="evidence at protein level"/>
<dbReference type="EC" id="4.2.3.-" evidence="7"/>
<dbReference type="EMBL" id="HQ426150">
    <property type="protein sequence ID" value="ADZ45512.1"/>
    <property type="molecule type" value="mRNA"/>
</dbReference>
<dbReference type="SMR" id="F2XF92"/>
<dbReference type="OMA" id="RTHENMM"/>
<dbReference type="UniPathway" id="UPA00924"/>
<dbReference type="GO" id="GO:0009507">
    <property type="term" value="C:chloroplast"/>
    <property type="evidence" value="ECO:0007669"/>
    <property type="project" value="UniProtKB-SubCell"/>
</dbReference>
<dbReference type="GO" id="GO:0016829">
    <property type="term" value="F:lyase activity"/>
    <property type="evidence" value="ECO:0000314"/>
    <property type="project" value="UniProtKB"/>
</dbReference>
<dbReference type="GO" id="GO:0000287">
    <property type="term" value="F:magnesium ion binding"/>
    <property type="evidence" value="ECO:0007669"/>
    <property type="project" value="InterPro"/>
</dbReference>
<dbReference type="GO" id="GO:0010333">
    <property type="term" value="F:terpene synthase activity"/>
    <property type="evidence" value="ECO:0007669"/>
    <property type="project" value="InterPro"/>
</dbReference>
<dbReference type="GO" id="GO:0016102">
    <property type="term" value="P:diterpenoid biosynthetic process"/>
    <property type="evidence" value="ECO:0000314"/>
    <property type="project" value="UniProtKB"/>
</dbReference>
<dbReference type="GO" id="GO:0010597">
    <property type="term" value="P:green leaf volatile biosynthetic process"/>
    <property type="evidence" value="ECO:0000314"/>
    <property type="project" value="UniProtKB"/>
</dbReference>
<dbReference type="CDD" id="cd00684">
    <property type="entry name" value="Terpene_cyclase_plant_C1"/>
    <property type="match status" value="1"/>
</dbReference>
<dbReference type="FunFam" id="1.50.10.130:FF:000002">
    <property type="entry name" value="Ent-copalyl diphosphate synthase, chloroplastic"/>
    <property type="match status" value="1"/>
</dbReference>
<dbReference type="FunFam" id="1.10.600.10:FF:000005">
    <property type="entry name" value="Ent-kaur-16-ene synthase, chloroplastic"/>
    <property type="match status" value="1"/>
</dbReference>
<dbReference type="Gene3D" id="1.50.10.160">
    <property type="match status" value="1"/>
</dbReference>
<dbReference type="Gene3D" id="1.10.600.10">
    <property type="entry name" value="Farnesyl Diphosphate Synthase"/>
    <property type="match status" value="1"/>
</dbReference>
<dbReference type="Gene3D" id="1.50.10.130">
    <property type="entry name" value="Terpene synthase, N-terminal domain"/>
    <property type="match status" value="1"/>
</dbReference>
<dbReference type="InterPro" id="IPR008949">
    <property type="entry name" value="Isoprenoid_synthase_dom_sf"/>
</dbReference>
<dbReference type="InterPro" id="IPR034741">
    <property type="entry name" value="Terpene_cyclase-like_1_C"/>
</dbReference>
<dbReference type="InterPro" id="IPR044814">
    <property type="entry name" value="Terpene_cyclase_plant_C1"/>
</dbReference>
<dbReference type="InterPro" id="IPR001906">
    <property type="entry name" value="Terpene_synth_N"/>
</dbReference>
<dbReference type="InterPro" id="IPR036965">
    <property type="entry name" value="Terpene_synth_N_sf"/>
</dbReference>
<dbReference type="InterPro" id="IPR050148">
    <property type="entry name" value="Terpene_synthase-like"/>
</dbReference>
<dbReference type="InterPro" id="IPR005630">
    <property type="entry name" value="Terpene_synthase_metal-bd"/>
</dbReference>
<dbReference type="InterPro" id="IPR008930">
    <property type="entry name" value="Terpenoid_cyclase/PrenylTrfase"/>
</dbReference>
<dbReference type="PANTHER" id="PTHR31739:SF25">
    <property type="entry name" value="(E,E)-GERANYLLINALOOL SYNTHASE"/>
    <property type="match status" value="1"/>
</dbReference>
<dbReference type="PANTHER" id="PTHR31739">
    <property type="entry name" value="ENT-COPALYL DIPHOSPHATE SYNTHASE, CHLOROPLASTIC"/>
    <property type="match status" value="1"/>
</dbReference>
<dbReference type="Pfam" id="PF01397">
    <property type="entry name" value="Terpene_synth"/>
    <property type="match status" value="1"/>
</dbReference>
<dbReference type="Pfam" id="PF03936">
    <property type="entry name" value="Terpene_synth_C"/>
    <property type="match status" value="1"/>
</dbReference>
<dbReference type="SFLD" id="SFLDS00005">
    <property type="entry name" value="Isoprenoid_Synthase_Type_I"/>
    <property type="match status" value="1"/>
</dbReference>
<dbReference type="SFLD" id="SFLDG01019">
    <property type="entry name" value="Terpene_Cyclase_Like_1_C_Termi"/>
    <property type="match status" value="1"/>
</dbReference>
<dbReference type="SFLD" id="SFLDG01014">
    <property type="entry name" value="Terpene_Cyclase_Like_1_N-term"/>
    <property type="match status" value="1"/>
</dbReference>
<dbReference type="SFLD" id="SFLDG01605">
    <property type="entry name" value="Terpene_Cyclase_Like_1_N-term"/>
    <property type="match status" value="1"/>
</dbReference>
<dbReference type="SUPFAM" id="SSF48239">
    <property type="entry name" value="Terpenoid cyclases/Protein prenyltransferases"/>
    <property type="match status" value="2"/>
</dbReference>
<dbReference type="SUPFAM" id="SSF48576">
    <property type="entry name" value="Terpenoid synthases"/>
    <property type="match status" value="1"/>
</dbReference>
<reference key="1">
    <citation type="journal article" date="2011" name="BMC Plant Biol.">
        <title>Transcriptome mining, functional characterization, and phylogeny of a large terpene synthase gene family in spruce (Picea spp.).</title>
        <authorList>
            <person name="Keeling C.I."/>
            <person name="Weisshaar S."/>
            <person name="Ralph S.G."/>
            <person name="Jancsik S."/>
            <person name="Hamberger B."/>
            <person name="Dullat H.K."/>
            <person name="Bohlmann J."/>
        </authorList>
    </citation>
    <scope>NUCLEOTIDE SEQUENCE [MRNA]</scope>
    <scope>CATALYTIC ACTIVITY</scope>
    <scope>FUNCTION</scope>
    <scope>PATHWAY</scope>
    <scope>GENE FAMILY</scope>
    <source>
        <strain>cv. Haney 898</strain>
    </source>
</reference>
<comment type="function">
    <text evidence="7">Terpene synthase (TPS) involved in the biosynthesis of diterpene natural products included in conifer oleoresin secretions and volatile emissions; these compounds contribute to biotic and abiotic stress defense against herbivores and pathogens (PubMed:21385377). Catalyzes the conversion of (+)-copalyl diphosphate ((+)-CPP) to isopimaradiene (PubMed:21385377).</text>
</comment>
<comment type="catalytic activity">
    <reaction evidence="7">
        <text>(+)-copalyl diphosphate = isopimara-8(14),15-diene + diphosphate</text>
        <dbReference type="Rhea" id="RHEA:32003"/>
        <dbReference type="ChEBI" id="CHEBI:33019"/>
        <dbReference type="ChEBI" id="CHEBI:58635"/>
        <dbReference type="ChEBI" id="CHEBI:63708"/>
    </reaction>
</comment>
<comment type="cofactor">
    <cofactor evidence="1">
        <name>Mg(2+)</name>
        <dbReference type="ChEBI" id="CHEBI:18420"/>
    </cofactor>
    <cofactor evidence="1">
        <name>Mn(2+)</name>
        <dbReference type="ChEBI" id="CHEBI:29035"/>
    </cofactor>
    <text evidence="1">Binds 3 Mg(2+) or Mn(2+) ions per subunit.</text>
</comment>
<comment type="pathway">
    <text evidence="7">Terpene metabolism; oleoresin biosynthesis.</text>
</comment>
<comment type="subcellular location">
    <subcellularLocation>
        <location evidence="5">Plastid</location>
        <location evidence="5">Chloroplast</location>
    </subcellularLocation>
</comment>
<comment type="domain">
    <text evidence="1 2">The Asp-Xaa-Asp-Asp (DXDD) motif is important for the catalytic activity in the class II active site relevant for the cyclization of GGPP. The Asp-Asp-Xaa-Xaa-Asp/Glu (DDXXD/E) motif is important for the catalytic activity in the class I active site, presumably through binding to Mg(2+).</text>
</comment>
<comment type="similarity">
    <text evidence="9">Belongs to the terpene synthase family. Tpsd subfamily.</text>
</comment>